<keyword id="KW-0880">Kelch repeat</keyword>
<keyword id="KW-1185">Reference proteome</keyword>
<keyword id="KW-0677">Repeat</keyword>
<sequence>MFRLRAHGKKPITITTTTTTTASTFLYWSPESSPTALSSPTNLDPNIWSNLPNHLLEHILSLLPFKTLLTLRSISRHLRSLILSPSFISDHSFSLPSFLLLSHPQSFNSFPLFNPNLISWCTLPLPRSLSLTCASSLLSSSNGLLCFSLSPSSVSSLSIFNPLTRSSRSIKLPCYPFPFELLSLVTSPKGYKIFTLCSSSSAASSRSVCLYDSGDRSWRKFGGVDQVLPRGFNQDGVFYNGSLYFARSEPFLIVSVDLNDGKWTTATGDGVFPADDEITFARLVSDPEKKILYMVGGIGSNGICRSIKIWEFKEETESWIEVETLPDIVCRKFTSVCYHNYEHVYCLWHKEMICVCCYNWPEILFFHVGRRTWHWVPKCPSLPEKWSCGFRWFSFVPSLSASV</sequence>
<reference key="1">
    <citation type="journal article" date="1999" name="DNA Res.">
        <title>Structural analysis of Arabidopsis thaliana chromosome 5. IX. Sequence features of the regions of 1,011,550 bp covered by seventeen P1 and TAC clones.</title>
        <authorList>
            <person name="Kaneko T."/>
            <person name="Katoh T."/>
            <person name="Sato S."/>
            <person name="Nakamura Y."/>
            <person name="Asamizu E."/>
            <person name="Kotani H."/>
            <person name="Miyajima N."/>
            <person name="Tabata S."/>
        </authorList>
    </citation>
    <scope>NUCLEOTIDE SEQUENCE [LARGE SCALE GENOMIC DNA]</scope>
    <source>
        <strain>cv. Columbia</strain>
    </source>
</reference>
<reference key="2">
    <citation type="journal article" date="2017" name="Plant J.">
        <title>Araport11: a complete reannotation of the Arabidopsis thaliana reference genome.</title>
        <authorList>
            <person name="Cheng C.Y."/>
            <person name="Krishnakumar V."/>
            <person name="Chan A.P."/>
            <person name="Thibaud-Nissen F."/>
            <person name="Schobel S."/>
            <person name="Town C.D."/>
        </authorList>
    </citation>
    <scope>GENOME REANNOTATION</scope>
    <source>
        <strain>cv. Columbia</strain>
    </source>
</reference>
<reference key="3">
    <citation type="journal article" date="2003" name="Science">
        <title>Empirical analysis of transcriptional activity in the Arabidopsis genome.</title>
        <authorList>
            <person name="Yamada K."/>
            <person name="Lim J."/>
            <person name="Dale J.M."/>
            <person name="Chen H."/>
            <person name="Shinn P."/>
            <person name="Palm C.J."/>
            <person name="Southwick A.M."/>
            <person name="Wu H.C."/>
            <person name="Kim C.J."/>
            <person name="Nguyen M."/>
            <person name="Pham P.K."/>
            <person name="Cheuk R.F."/>
            <person name="Karlin-Newmann G."/>
            <person name="Liu S.X."/>
            <person name="Lam B."/>
            <person name="Sakano H."/>
            <person name="Wu T."/>
            <person name="Yu G."/>
            <person name="Miranda M."/>
            <person name="Quach H.L."/>
            <person name="Tripp M."/>
            <person name="Chang C.H."/>
            <person name="Lee J.M."/>
            <person name="Toriumi M.J."/>
            <person name="Chan M.M."/>
            <person name="Tang C.C."/>
            <person name="Onodera C.S."/>
            <person name="Deng J.M."/>
            <person name="Akiyama K."/>
            <person name="Ansari Y."/>
            <person name="Arakawa T."/>
            <person name="Banh J."/>
            <person name="Banno F."/>
            <person name="Bowser L."/>
            <person name="Brooks S.Y."/>
            <person name="Carninci P."/>
            <person name="Chao Q."/>
            <person name="Choy N."/>
            <person name="Enju A."/>
            <person name="Goldsmith A.D."/>
            <person name="Gurjal M."/>
            <person name="Hansen N.F."/>
            <person name="Hayashizaki Y."/>
            <person name="Johnson-Hopson C."/>
            <person name="Hsuan V.W."/>
            <person name="Iida K."/>
            <person name="Karnes M."/>
            <person name="Khan S."/>
            <person name="Koesema E."/>
            <person name="Ishida J."/>
            <person name="Jiang P.X."/>
            <person name="Jones T."/>
            <person name="Kawai J."/>
            <person name="Kamiya A."/>
            <person name="Meyers C."/>
            <person name="Nakajima M."/>
            <person name="Narusaka M."/>
            <person name="Seki M."/>
            <person name="Sakurai T."/>
            <person name="Satou M."/>
            <person name="Tamse R."/>
            <person name="Vaysberg M."/>
            <person name="Wallender E.K."/>
            <person name="Wong C."/>
            <person name="Yamamura Y."/>
            <person name="Yuan S."/>
            <person name="Shinozaki K."/>
            <person name="Davis R.W."/>
            <person name="Theologis A."/>
            <person name="Ecker J.R."/>
        </authorList>
    </citation>
    <scope>NUCLEOTIDE SEQUENCE [LARGE SCALE MRNA]</scope>
    <source>
        <strain>cv. Columbia</strain>
    </source>
</reference>
<reference key="4">
    <citation type="submission" date="2006-07" db="EMBL/GenBank/DDBJ databases">
        <title>Large-scale analysis of RIKEN Arabidopsis full-length (RAFL) cDNAs.</title>
        <authorList>
            <person name="Totoki Y."/>
            <person name="Seki M."/>
            <person name="Ishida J."/>
            <person name="Nakajima M."/>
            <person name="Enju A."/>
            <person name="Kamiya A."/>
            <person name="Narusaka M."/>
            <person name="Shin-i T."/>
            <person name="Nakagawa M."/>
            <person name="Sakamoto N."/>
            <person name="Oishi K."/>
            <person name="Kohara Y."/>
            <person name="Kobayashi M."/>
            <person name="Toyoda A."/>
            <person name="Sakaki Y."/>
            <person name="Sakurai T."/>
            <person name="Iida K."/>
            <person name="Akiyama K."/>
            <person name="Satou M."/>
            <person name="Toyoda T."/>
            <person name="Konagaya A."/>
            <person name="Carninci P."/>
            <person name="Kawai J."/>
            <person name="Hayashizaki Y."/>
            <person name="Shinozaki K."/>
        </authorList>
    </citation>
    <scope>NUCLEOTIDE SEQUENCE [LARGE SCALE MRNA]</scope>
    <source>
        <strain>cv. Columbia</strain>
    </source>
</reference>
<protein>
    <recommendedName>
        <fullName>F-box/kelch-repeat protein At5g43190</fullName>
    </recommendedName>
</protein>
<proteinExistence type="evidence at transcript level"/>
<feature type="chain" id="PRO_0000283274" description="F-box/kelch-repeat protein At5g43190">
    <location>
        <begin position="1"/>
        <end position="403"/>
    </location>
</feature>
<feature type="domain" description="F-box" evidence="1">
    <location>
        <begin position="45"/>
        <end position="91"/>
    </location>
</feature>
<feature type="repeat" description="Kelch 1">
    <location>
        <begin position="91"/>
        <end position="140"/>
    </location>
</feature>
<feature type="repeat" description="Kelch 2">
    <location>
        <begin position="192"/>
        <end position="240"/>
    </location>
</feature>
<feature type="repeat" description="Kelch 3">
    <location>
        <begin position="291"/>
        <end position="339"/>
    </location>
</feature>
<feature type="repeat" description="Kelch 4">
    <location>
        <begin position="343"/>
        <end position="393"/>
    </location>
</feature>
<evidence type="ECO:0000255" key="1">
    <source>
        <dbReference type="PROSITE-ProRule" id="PRU00080"/>
    </source>
</evidence>
<gene>
    <name type="ordered locus">At5g43190</name>
    <name type="ORF">MNL12.1</name>
</gene>
<accession>Q9FHS6</accession>
<dbReference type="EMBL" id="AB017070">
    <property type="protein sequence ID" value="BAB10582.1"/>
    <property type="molecule type" value="Genomic_DNA"/>
</dbReference>
<dbReference type="EMBL" id="CP002688">
    <property type="protein sequence ID" value="AED94922.1"/>
    <property type="molecule type" value="Genomic_DNA"/>
</dbReference>
<dbReference type="EMBL" id="BT003084">
    <property type="protein sequence ID" value="AAO23649.1"/>
    <property type="molecule type" value="mRNA"/>
</dbReference>
<dbReference type="EMBL" id="AK227592">
    <property type="protein sequence ID" value="BAE99583.1"/>
    <property type="molecule type" value="mRNA"/>
</dbReference>
<dbReference type="RefSeq" id="NP_568622.1">
    <property type="nucleotide sequence ID" value="NM_123685.4"/>
</dbReference>
<dbReference type="SMR" id="Q9FHS6"/>
<dbReference type="BioGRID" id="19587">
    <property type="interactions" value="2"/>
</dbReference>
<dbReference type="FunCoup" id="Q9FHS6">
    <property type="interactions" value="196"/>
</dbReference>
<dbReference type="IntAct" id="Q9FHS6">
    <property type="interactions" value="2"/>
</dbReference>
<dbReference type="STRING" id="3702.Q9FHS6"/>
<dbReference type="PaxDb" id="3702-AT5G43190.1"/>
<dbReference type="ProteomicsDB" id="230104"/>
<dbReference type="EnsemblPlants" id="AT5G43190.1">
    <property type="protein sequence ID" value="AT5G43190.1"/>
    <property type="gene ID" value="AT5G43190"/>
</dbReference>
<dbReference type="GeneID" id="834337"/>
<dbReference type="Gramene" id="AT5G43190.1">
    <property type="protein sequence ID" value="AT5G43190.1"/>
    <property type="gene ID" value="AT5G43190"/>
</dbReference>
<dbReference type="KEGG" id="ath:AT5G43190"/>
<dbReference type="Araport" id="AT5G43190"/>
<dbReference type="TAIR" id="AT5G43190"/>
<dbReference type="eggNOG" id="ENOG502QV69">
    <property type="taxonomic scope" value="Eukaryota"/>
</dbReference>
<dbReference type="HOGENOM" id="CLU_038778_2_1_1"/>
<dbReference type="InParanoid" id="Q9FHS6"/>
<dbReference type="OMA" id="SHPQFHR"/>
<dbReference type="PhylomeDB" id="Q9FHS6"/>
<dbReference type="PRO" id="PR:Q9FHS6"/>
<dbReference type="Proteomes" id="UP000006548">
    <property type="component" value="Chromosome 5"/>
</dbReference>
<dbReference type="ExpressionAtlas" id="Q9FHS6">
    <property type="expression patterns" value="baseline and differential"/>
</dbReference>
<dbReference type="FunFam" id="1.20.1280.50:FF:000085">
    <property type="entry name" value="F-box domain containing protein"/>
    <property type="match status" value="1"/>
</dbReference>
<dbReference type="FunFam" id="2.120.10.80:FF:000169">
    <property type="entry name" value="F-box family protein"/>
    <property type="match status" value="1"/>
</dbReference>
<dbReference type="Gene3D" id="1.20.1280.50">
    <property type="match status" value="1"/>
</dbReference>
<dbReference type="Gene3D" id="2.120.10.80">
    <property type="entry name" value="Kelch-type beta propeller"/>
    <property type="match status" value="1"/>
</dbReference>
<dbReference type="InterPro" id="IPR017451">
    <property type="entry name" value="F-box-assoc_interact_dom"/>
</dbReference>
<dbReference type="InterPro" id="IPR036047">
    <property type="entry name" value="F-box-like_dom_sf"/>
</dbReference>
<dbReference type="InterPro" id="IPR001810">
    <property type="entry name" value="F-box_dom"/>
</dbReference>
<dbReference type="InterPro" id="IPR011043">
    <property type="entry name" value="Gal_Oxase/kelch_b-propeller"/>
</dbReference>
<dbReference type="InterPro" id="IPR015915">
    <property type="entry name" value="Kelch-typ_b-propeller"/>
</dbReference>
<dbReference type="InterPro" id="IPR005174">
    <property type="entry name" value="KIB1-4_b-propeller"/>
</dbReference>
<dbReference type="InterPro" id="IPR050796">
    <property type="entry name" value="SCF_F-box_component"/>
</dbReference>
<dbReference type="NCBIfam" id="TIGR01640">
    <property type="entry name" value="F_box_assoc_1"/>
    <property type="match status" value="1"/>
</dbReference>
<dbReference type="PANTHER" id="PTHR31672">
    <property type="entry name" value="BNACNNG10540D PROTEIN"/>
    <property type="match status" value="1"/>
</dbReference>
<dbReference type="PANTHER" id="PTHR31672:SF12">
    <property type="entry name" value="F-BOX DOMAIN-CONTAINING PROTEIN"/>
    <property type="match status" value="1"/>
</dbReference>
<dbReference type="Pfam" id="PF03478">
    <property type="entry name" value="Beta-prop_KIB1-4"/>
    <property type="match status" value="1"/>
</dbReference>
<dbReference type="Pfam" id="PF00646">
    <property type="entry name" value="F-box"/>
    <property type="match status" value="1"/>
</dbReference>
<dbReference type="SMART" id="SM00256">
    <property type="entry name" value="FBOX"/>
    <property type="match status" value="1"/>
</dbReference>
<dbReference type="SUPFAM" id="SSF81383">
    <property type="entry name" value="F-box domain"/>
    <property type="match status" value="1"/>
</dbReference>
<dbReference type="SUPFAM" id="SSF50965">
    <property type="entry name" value="Galactose oxidase, central domain"/>
    <property type="match status" value="1"/>
</dbReference>
<dbReference type="PROSITE" id="PS50181">
    <property type="entry name" value="FBOX"/>
    <property type="match status" value="1"/>
</dbReference>
<organism>
    <name type="scientific">Arabidopsis thaliana</name>
    <name type="common">Mouse-ear cress</name>
    <dbReference type="NCBI Taxonomy" id="3702"/>
    <lineage>
        <taxon>Eukaryota</taxon>
        <taxon>Viridiplantae</taxon>
        <taxon>Streptophyta</taxon>
        <taxon>Embryophyta</taxon>
        <taxon>Tracheophyta</taxon>
        <taxon>Spermatophyta</taxon>
        <taxon>Magnoliopsida</taxon>
        <taxon>eudicotyledons</taxon>
        <taxon>Gunneridae</taxon>
        <taxon>Pentapetalae</taxon>
        <taxon>rosids</taxon>
        <taxon>malvids</taxon>
        <taxon>Brassicales</taxon>
        <taxon>Brassicaceae</taxon>
        <taxon>Camelineae</taxon>
        <taxon>Arabidopsis</taxon>
    </lineage>
</organism>
<name>FK119_ARATH</name>